<keyword id="KW-0903">Direct protein sequencing</keyword>
<keyword id="KW-0325">Glycoprotein</keyword>
<keyword id="KW-1185">Reference proteome</keyword>
<keyword id="KW-0964">Secreted</keyword>
<keyword id="KW-0732">Signal</keyword>
<comment type="function">
    <text evidence="2">Cell-counting factor that limits the maximum size of the multicellular structure. Does not possess acid phosphatase activity. Cells with decreased levels of this protein form large groups while cells overexpressing this protein form small groups.</text>
</comment>
<comment type="subunit">
    <text evidence="2">Component of the counting factor (CF) complex, which includes cf60, cf50, cf45-1 and ctnA.</text>
</comment>
<comment type="subcellular location">
    <subcellularLocation>
        <location evidence="2">Secreted</location>
    </subcellularLocation>
</comment>
<comment type="developmental stage">
    <text evidence="2">Expressed in the vegetative cells and decreases during subsequent developmental stages (6-24 hours).</text>
</comment>
<comment type="disruption phenotype">
    <text evidence="2">Cells die quickly.</text>
</comment>
<comment type="similarity">
    <text evidence="3">Belongs to the histidine acid phosphatase family.</text>
</comment>
<dbReference type="EMBL" id="DQ143912">
    <property type="protein sequence ID" value="AAZ73157.1"/>
    <property type="molecule type" value="mRNA"/>
</dbReference>
<dbReference type="EMBL" id="AAFI02000064">
    <property type="protein sequence ID" value="EAL65230.1"/>
    <property type="molecule type" value="Genomic_DNA"/>
</dbReference>
<dbReference type="RefSeq" id="XP_638585.1">
    <property type="nucleotide sequence ID" value="XM_633493.1"/>
</dbReference>
<dbReference type="SMR" id="Q54PR9"/>
<dbReference type="FunCoup" id="Q54PR9">
    <property type="interactions" value="3"/>
</dbReference>
<dbReference type="STRING" id="44689.Q54PR9"/>
<dbReference type="GlyCosmos" id="Q54PR9">
    <property type="glycosylation" value="5 sites, No reported glycans"/>
</dbReference>
<dbReference type="GlyGen" id="Q54PR9">
    <property type="glycosylation" value="6 sites"/>
</dbReference>
<dbReference type="PaxDb" id="44689-DDB0229833"/>
<dbReference type="EnsemblProtists" id="EAL65230">
    <property type="protein sequence ID" value="EAL65230"/>
    <property type="gene ID" value="DDB_G0284363"/>
</dbReference>
<dbReference type="GeneID" id="8624557"/>
<dbReference type="KEGG" id="ddi:DDB_G0284363"/>
<dbReference type="dictyBase" id="DDB_G0284363">
    <property type="gene designation" value="cf60"/>
</dbReference>
<dbReference type="VEuPathDB" id="AmoebaDB:DDB_G0284363"/>
<dbReference type="eggNOG" id="KOG3720">
    <property type="taxonomic scope" value="Eukaryota"/>
</dbReference>
<dbReference type="HOGENOM" id="CLU_030431_5_0_1"/>
<dbReference type="InParanoid" id="Q54PR9"/>
<dbReference type="OMA" id="TYDTLHC"/>
<dbReference type="PhylomeDB" id="Q54PR9"/>
<dbReference type="Reactome" id="R-DDI-1483166">
    <property type="pathway name" value="Synthesis of PA"/>
</dbReference>
<dbReference type="Reactome" id="R-DDI-6798695">
    <property type="pathway name" value="Neutrophil degranulation"/>
</dbReference>
<dbReference type="PRO" id="PR:Q54PR9"/>
<dbReference type="Proteomes" id="UP000002195">
    <property type="component" value="Chromosome 4"/>
</dbReference>
<dbReference type="GO" id="GO:0005576">
    <property type="term" value="C:extracellular region"/>
    <property type="evidence" value="ECO:0007669"/>
    <property type="project" value="UniProtKB-SubCell"/>
</dbReference>
<dbReference type="GO" id="GO:0016791">
    <property type="term" value="F:phosphatase activity"/>
    <property type="evidence" value="ECO:0000318"/>
    <property type="project" value="GO_Central"/>
</dbReference>
<dbReference type="GO" id="GO:0031158">
    <property type="term" value="P:negative regulation of aggregate size involved in sorocarp development"/>
    <property type="evidence" value="ECO:0000314"/>
    <property type="project" value="dictyBase"/>
</dbReference>
<dbReference type="CDD" id="cd07061">
    <property type="entry name" value="HP_HAP_like"/>
    <property type="match status" value="1"/>
</dbReference>
<dbReference type="FunFam" id="3.40.50.1240:FF:000030">
    <property type="entry name" value="Lysophosphatidic acid phosphatase type 6"/>
    <property type="match status" value="1"/>
</dbReference>
<dbReference type="Gene3D" id="3.40.50.1240">
    <property type="entry name" value="Phosphoglycerate mutase-like"/>
    <property type="match status" value="1"/>
</dbReference>
<dbReference type="InterPro" id="IPR033379">
    <property type="entry name" value="Acid_Pase_AS"/>
</dbReference>
<dbReference type="InterPro" id="IPR000560">
    <property type="entry name" value="His_Pase_clade-2"/>
</dbReference>
<dbReference type="InterPro" id="IPR029033">
    <property type="entry name" value="His_PPase_superfam"/>
</dbReference>
<dbReference type="InterPro" id="IPR050645">
    <property type="entry name" value="Histidine_acid_phosphatase"/>
</dbReference>
<dbReference type="PANTHER" id="PTHR11567">
    <property type="entry name" value="ACID PHOSPHATASE-RELATED"/>
    <property type="match status" value="1"/>
</dbReference>
<dbReference type="PANTHER" id="PTHR11567:SF203">
    <property type="entry name" value="COUNTING FACTOR 60"/>
    <property type="match status" value="1"/>
</dbReference>
<dbReference type="Pfam" id="PF00328">
    <property type="entry name" value="His_Phos_2"/>
    <property type="match status" value="1"/>
</dbReference>
<dbReference type="SUPFAM" id="SSF53254">
    <property type="entry name" value="Phosphoglycerate mutase-like"/>
    <property type="match status" value="1"/>
</dbReference>
<dbReference type="PROSITE" id="PS00616">
    <property type="entry name" value="HIS_ACID_PHOSPHAT_1"/>
    <property type="match status" value="1"/>
</dbReference>
<reference key="1">
    <citation type="journal article" date="2006" name="Eukaryot. Cell">
        <title>A 60-kilodalton protein component of the counting factor complex regulates group size in Dictyostelium discoideum.</title>
        <authorList>
            <person name="Brock D.A."/>
            <person name="van Egmond W.N."/>
            <person name="Shamoo Y."/>
            <person name="Hatton R.D."/>
            <person name="Gomer R.H."/>
        </authorList>
    </citation>
    <scope>NUCLEOTIDE SEQUENCE [MRNA]</scope>
    <scope>PROTEIN SEQUENCE OF 300-314</scope>
    <scope>FUNCTION</scope>
    <scope>SUBCELLULAR LOCATION</scope>
    <scope>DEVELOPMENTAL STAGE</scope>
    <scope>IDENTIFICATION IN THE CF COMPLEX</scope>
    <scope>DISRUPTION PHENOTYPE</scope>
</reference>
<reference key="2">
    <citation type="journal article" date="2005" name="Nature">
        <title>The genome of the social amoeba Dictyostelium discoideum.</title>
        <authorList>
            <person name="Eichinger L."/>
            <person name="Pachebat J.A."/>
            <person name="Gloeckner G."/>
            <person name="Rajandream M.A."/>
            <person name="Sucgang R."/>
            <person name="Berriman M."/>
            <person name="Song J."/>
            <person name="Olsen R."/>
            <person name="Szafranski K."/>
            <person name="Xu Q."/>
            <person name="Tunggal B."/>
            <person name="Kummerfeld S."/>
            <person name="Madera M."/>
            <person name="Konfortov B.A."/>
            <person name="Rivero F."/>
            <person name="Bankier A.T."/>
            <person name="Lehmann R."/>
            <person name="Hamlin N."/>
            <person name="Davies R."/>
            <person name="Gaudet P."/>
            <person name="Fey P."/>
            <person name="Pilcher K."/>
            <person name="Chen G."/>
            <person name="Saunders D."/>
            <person name="Sodergren E.J."/>
            <person name="Davis P."/>
            <person name="Kerhornou A."/>
            <person name="Nie X."/>
            <person name="Hall N."/>
            <person name="Anjard C."/>
            <person name="Hemphill L."/>
            <person name="Bason N."/>
            <person name="Farbrother P."/>
            <person name="Desany B."/>
            <person name="Just E."/>
            <person name="Morio T."/>
            <person name="Rost R."/>
            <person name="Churcher C.M."/>
            <person name="Cooper J."/>
            <person name="Haydock S."/>
            <person name="van Driessche N."/>
            <person name="Cronin A."/>
            <person name="Goodhead I."/>
            <person name="Muzny D.M."/>
            <person name="Mourier T."/>
            <person name="Pain A."/>
            <person name="Lu M."/>
            <person name="Harper D."/>
            <person name="Lindsay R."/>
            <person name="Hauser H."/>
            <person name="James K.D."/>
            <person name="Quiles M."/>
            <person name="Madan Babu M."/>
            <person name="Saito T."/>
            <person name="Buchrieser C."/>
            <person name="Wardroper A."/>
            <person name="Felder M."/>
            <person name="Thangavelu M."/>
            <person name="Johnson D."/>
            <person name="Knights A."/>
            <person name="Loulseged H."/>
            <person name="Mungall K.L."/>
            <person name="Oliver K."/>
            <person name="Price C."/>
            <person name="Quail M.A."/>
            <person name="Urushihara H."/>
            <person name="Hernandez J."/>
            <person name="Rabbinowitsch E."/>
            <person name="Steffen D."/>
            <person name="Sanders M."/>
            <person name="Ma J."/>
            <person name="Kohara Y."/>
            <person name="Sharp S."/>
            <person name="Simmonds M.N."/>
            <person name="Spiegler S."/>
            <person name="Tivey A."/>
            <person name="Sugano S."/>
            <person name="White B."/>
            <person name="Walker D."/>
            <person name="Woodward J.R."/>
            <person name="Winckler T."/>
            <person name="Tanaka Y."/>
            <person name="Shaulsky G."/>
            <person name="Schleicher M."/>
            <person name="Weinstock G.M."/>
            <person name="Rosenthal A."/>
            <person name="Cox E.C."/>
            <person name="Chisholm R.L."/>
            <person name="Gibbs R.A."/>
            <person name="Loomis W.F."/>
            <person name="Platzer M."/>
            <person name="Kay R.R."/>
            <person name="Williams J.G."/>
            <person name="Dear P.H."/>
            <person name="Noegel A.A."/>
            <person name="Barrell B.G."/>
            <person name="Kuspa A."/>
        </authorList>
    </citation>
    <scope>NUCLEOTIDE SEQUENCE [LARGE SCALE GENOMIC DNA]</scope>
    <source>
        <strain>AX4</strain>
    </source>
</reference>
<protein>
    <recommendedName>
        <fullName>Counting factor 60</fullName>
    </recommendedName>
</protein>
<proteinExistence type="evidence at protein level"/>
<accession>Q54PR9</accession>
<accession>Q3YBY3</accession>
<evidence type="ECO:0000255" key="1"/>
<evidence type="ECO:0000269" key="2">
    <source>
    </source>
</evidence>
<evidence type="ECO:0000305" key="3"/>
<sequence>MIKKSALITLFLVSLILGVSLSQKPFYCQAPEPTPSLNTDGLTLKMVQILTRHGDRTPLYSTLKPTMNTWDCNLGWLMVSSLNNVPGAATDVDRLFRKVYMPNREYFPGNCSDGQLTSLGFQQHLQLGQSLRQLYVDKYELLPSELSVDAASTIWVRSTDVPRTIQSVQGHLTALFPPTTVTSGSGIPIININTMDNYYENMTPNPTLCPELAVLIANTTTTPEWGEFITNTTQLKEDVMETLGISVFPGWSSLMDLFFATQCHDFPLPEGVTQDMVTQVYEAAYWQYQYQLSFPMIARLGMSTFLEEVVDNIRAFVNGTSSVKYIVFSGHDDSVGPFTNLFGLMKEWPPYASHVELELWSDEKDNYFLQFKFNGQSYTLNGCEDVMCPIDSFFETAYSILVPNYADACSNSTMTF</sequence>
<organism>
    <name type="scientific">Dictyostelium discoideum</name>
    <name type="common">Social amoeba</name>
    <dbReference type="NCBI Taxonomy" id="44689"/>
    <lineage>
        <taxon>Eukaryota</taxon>
        <taxon>Amoebozoa</taxon>
        <taxon>Evosea</taxon>
        <taxon>Eumycetozoa</taxon>
        <taxon>Dictyostelia</taxon>
        <taxon>Dictyosteliales</taxon>
        <taxon>Dictyosteliaceae</taxon>
        <taxon>Dictyostelium</taxon>
    </lineage>
</organism>
<feature type="signal peptide" evidence="1">
    <location>
        <begin position="1"/>
        <end position="22"/>
    </location>
</feature>
<feature type="chain" id="PRO_0000328378" description="Counting factor 60">
    <location>
        <begin position="23"/>
        <end position="416"/>
    </location>
</feature>
<feature type="glycosylation site" description="N-linked (GlcNAc...) asparagine" evidence="1">
    <location>
        <position position="110"/>
    </location>
</feature>
<feature type="glycosylation site" description="N-linked (GlcNAc...) asparagine" evidence="1">
    <location>
        <position position="218"/>
    </location>
</feature>
<feature type="glycosylation site" description="N-linked (GlcNAc...) asparagine" evidence="1">
    <location>
        <position position="231"/>
    </location>
</feature>
<feature type="glycosylation site" description="N-linked (GlcNAc...) asparagine" evidence="1">
    <location>
        <position position="318"/>
    </location>
</feature>
<feature type="glycosylation site" description="N-linked (GlcNAc...) asparagine" evidence="1">
    <location>
        <position position="411"/>
    </location>
</feature>
<gene>
    <name type="primary">cf60</name>
    <name type="ORF">DDB_G0284363</name>
</gene>
<name>CF60_DICDI</name>